<name>OR5T2_HUMAN</name>
<reference key="1">
    <citation type="submission" date="2001-07" db="EMBL/GenBank/DDBJ databases">
        <title>Genome-wide discovery and analysis of human seven transmembrane helix receptor genes.</title>
        <authorList>
            <person name="Suwa M."/>
            <person name="Sato T."/>
            <person name="Okouchi I."/>
            <person name="Arita M."/>
            <person name="Futami K."/>
            <person name="Matsumoto S."/>
            <person name="Tsutsumi S."/>
            <person name="Aburatani H."/>
            <person name="Asai K."/>
            <person name="Akiyama Y."/>
        </authorList>
    </citation>
    <scope>NUCLEOTIDE SEQUENCE [GENOMIC DNA]</scope>
</reference>
<reference key="2">
    <citation type="journal article" date="2006" name="Nature">
        <title>Human chromosome 11 DNA sequence and analysis including novel gene identification.</title>
        <authorList>
            <person name="Taylor T.D."/>
            <person name="Noguchi H."/>
            <person name="Totoki Y."/>
            <person name="Toyoda A."/>
            <person name="Kuroki Y."/>
            <person name="Dewar K."/>
            <person name="Lloyd C."/>
            <person name="Itoh T."/>
            <person name="Takeda T."/>
            <person name="Kim D.-W."/>
            <person name="She X."/>
            <person name="Barlow K.F."/>
            <person name="Bloom T."/>
            <person name="Bruford E."/>
            <person name="Chang J.L."/>
            <person name="Cuomo C.A."/>
            <person name="Eichler E."/>
            <person name="FitzGerald M.G."/>
            <person name="Jaffe D.B."/>
            <person name="LaButti K."/>
            <person name="Nicol R."/>
            <person name="Park H.-S."/>
            <person name="Seaman C."/>
            <person name="Sougnez C."/>
            <person name="Yang X."/>
            <person name="Zimmer A.R."/>
            <person name="Zody M.C."/>
            <person name="Birren B.W."/>
            <person name="Nusbaum C."/>
            <person name="Fujiyama A."/>
            <person name="Hattori M."/>
            <person name="Rogers J."/>
            <person name="Lander E.S."/>
            <person name="Sakaki Y."/>
        </authorList>
    </citation>
    <scope>NUCLEOTIDE SEQUENCE [LARGE SCALE GENOMIC DNA]</scope>
</reference>
<reference key="3">
    <citation type="journal article" date="2004" name="Genome Res.">
        <title>The status, quality, and expansion of the NIH full-length cDNA project: the Mammalian Gene Collection (MGC).</title>
        <authorList>
            <consortium name="The MGC Project Team"/>
        </authorList>
    </citation>
    <scope>NUCLEOTIDE SEQUENCE [LARGE SCALE MRNA]</scope>
    <scope>VARIANT LEU-87</scope>
    <source>
        <tissue>Testis</tissue>
    </source>
</reference>
<reference key="4">
    <citation type="journal article" date="2004" name="Proc. Natl. Acad. Sci. U.S.A.">
        <title>The human olfactory receptor gene family.</title>
        <authorList>
            <person name="Malnic B."/>
            <person name="Godfrey P.A."/>
            <person name="Buck L.B."/>
        </authorList>
    </citation>
    <scope>IDENTIFICATION</scope>
</reference>
<reference key="5">
    <citation type="journal article" date="2004" name="Proc. Natl. Acad. Sci. U.S.A.">
        <authorList>
            <person name="Malnic B."/>
            <person name="Godfrey P.A."/>
            <person name="Buck L.B."/>
        </authorList>
    </citation>
    <scope>ERRATUM OF PUBMED:14983052</scope>
</reference>
<feature type="chain" id="PRO_0000150614" description="Olfactory receptor 5T2">
    <location>
        <begin position="1"/>
        <end position="359"/>
    </location>
</feature>
<feature type="topological domain" description="Extracellular" evidence="1">
    <location>
        <begin position="1"/>
        <end position="64"/>
    </location>
</feature>
<feature type="transmembrane region" description="Helical; Name=1" evidence="1">
    <location>
        <begin position="65"/>
        <end position="85"/>
    </location>
</feature>
<feature type="topological domain" description="Cytoplasmic" evidence="1">
    <location>
        <begin position="86"/>
        <end position="93"/>
    </location>
</feature>
<feature type="transmembrane region" description="Helical; Name=2" evidence="1">
    <location>
        <begin position="94"/>
        <end position="114"/>
    </location>
</feature>
<feature type="topological domain" description="Extracellular" evidence="1">
    <location>
        <begin position="115"/>
        <end position="138"/>
    </location>
</feature>
<feature type="transmembrane region" description="Helical; Name=3" evidence="1">
    <location>
        <begin position="139"/>
        <end position="159"/>
    </location>
</feature>
<feature type="topological domain" description="Cytoplasmic" evidence="1">
    <location>
        <begin position="160"/>
        <end position="178"/>
    </location>
</feature>
<feature type="transmembrane region" description="Helical; Name=4" evidence="1">
    <location>
        <begin position="179"/>
        <end position="199"/>
    </location>
</feature>
<feature type="topological domain" description="Extracellular" evidence="1">
    <location>
        <begin position="200"/>
        <end position="235"/>
    </location>
</feature>
<feature type="transmembrane region" description="Helical; Name=5" evidence="1">
    <location>
        <begin position="236"/>
        <end position="256"/>
    </location>
</feature>
<feature type="topological domain" description="Cytoplasmic" evidence="1">
    <location>
        <begin position="257"/>
        <end position="276"/>
    </location>
</feature>
<feature type="transmembrane region" description="Helical; Name=6" evidence="1">
    <location>
        <begin position="277"/>
        <end position="297"/>
    </location>
</feature>
<feature type="topological domain" description="Extracellular" evidence="1">
    <location>
        <begin position="298"/>
        <end position="310"/>
    </location>
</feature>
<feature type="transmembrane region" description="Helical; Name=7" evidence="1">
    <location>
        <begin position="311"/>
        <end position="331"/>
    </location>
</feature>
<feature type="topological domain" description="Cytoplasmic" evidence="1">
    <location>
        <begin position="332"/>
        <end position="359"/>
    </location>
</feature>
<feature type="glycosylation site" description="N-linked (GlcNAc...) asparagine" evidence="1">
    <location>
        <position position="44"/>
    </location>
</feature>
<feature type="sequence variant" id="VAR_054349" description="In dbSNP:rs3919907.">
    <original>S</original>
    <variation>Y</variation>
    <location>
        <position position="21"/>
    </location>
</feature>
<feature type="sequence variant" id="VAR_054350" description="In dbSNP:rs11227599.">
    <original>T</original>
    <variation>I</variation>
    <location>
        <position position="64"/>
    </location>
</feature>
<feature type="sequence variant" id="VAR_054351" description="In dbSNP:rs10791893." evidence="3">
    <original>V</original>
    <variation>L</variation>
    <location>
        <position position="87"/>
    </location>
</feature>
<feature type="sequence variant" id="VAR_054352" description="In dbSNP:rs7122514.">
    <original>T</original>
    <variation>M</variation>
    <location>
        <position position="125"/>
    </location>
</feature>
<feature type="sequence variant" id="VAR_054353" description="In dbSNP:rs12221615.">
    <original>L</original>
    <variation>V</variation>
    <location>
        <position position="238"/>
    </location>
</feature>
<feature type="sequence variant" id="VAR_054354" description="In dbSNP:rs7121880.">
    <original>H</original>
    <variation>D</variation>
    <location>
        <position position="309"/>
    </location>
</feature>
<protein>
    <recommendedName>
        <fullName>Olfactory receptor 5T2</fullName>
    </recommendedName>
    <alternativeName>
        <fullName>Olfactory receptor OR11-177</fullName>
    </alternativeName>
</protein>
<gene>
    <name type="primary">OR5T2</name>
</gene>
<keyword id="KW-1003">Cell membrane</keyword>
<keyword id="KW-0297">G-protein coupled receptor</keyword>
<keyword id="KW-0325">Glycoprotein</keyword>
<keyword id="KW-0472">Membrane</keyword>
<keyword id="KW-0552">Olfaction</keyword>
<keyword id="KW-0675">Receptor</keyword>
<keyword id="KW-1185">Reference proteome</keyword>
<keyword id="KW-0716">Sensory transduction</keyword>
<keyword id="KW-0807">Transducer</keyword>
<keyword id="KW-0812">Transmembrane</keyword>
<keyword id="KW-1133">Transmembrane helix</keyword>
<evidence type="ECO:0000255" key="1"/>
<evidence type="ECO:0000255" key="2">
    <source>
        <dbReference type="PROSITE-ProRule" id="PRU00521"/>
    </source>
</evidence>
<evidence type="ECO:0000269" key="3">
    <source>
    </source>
</evidence>
<evidence type="ECO:0000305" key="4"/>
<comment type="function">
    <text evidence="4">Odorant receptor.</text>
</comment>
<comment type="subcellular location">
    <subcellularLocation>
        <location>Cell membrane</location>
        <topology>Multi-pass membrane protein</topology>
    </subcellularLocation>
</comment>
<comment type="similarity">
    <text evidence="2">Belongs to the G-protein coupled receptor 1 family.</text>
</comment>
<comment type="caution">
    <text evidence="4">It is uncertain whether Met-1 or Met-31 is the initiator.</text>
</comment>
<comment type="online information" name="Human Olfactory Receptor Data Exploratorium (HORDE)">
    <link uri="http://genome.weizmann.ac.il/horde/card/index/symbol:OR5T2"/>
</comment>
<proteinExistence type="evidence at transcript level"/>
<accession>Q8NGG2</accession>
<accession>B9EGX5</accession>
<accession>Q6IFC8</accession>
<organism>
    <name type="scientific">Homo sapiens</name>
    <name type="common">Human</name>
    <dbReference type="NCBI Taxonomy" id="9606"/>
    <lineage>
        <taxon>Eukaryota</taxon>
        <taxon>Metazoa</taxon>
        <taxon>Chordata</taxon>
        <taxon>Craniata</taxon>
        <taxon>Vertebrata</taxon>
        <taxon>Euteleostomi</taxon>
        <taxon>Mammalia</taxon>
        <taxon>Eutheria</taxon>
        <taxon>Euarchontoglires</taxon>
        <taxon>Primates</taxon>
        <taxon>Haplorrhini</taxon>
        <taxon>Catarrhini</taxon>
        <taxon>Hominidae</taxon>
        <taxon>Homo</taxon>
    </lineage>
</organism>
<dbReference type="EMBL" id="AB065838">
    <property type="protein sequence ID" value="BAC06057.1"/>
    <property type="molecule type" value="Genomic_DNA"/>
</dbReference>
<dbReference type="EMBL" id="AC022882">
    <property type="status" value="NOT_ANNOTATED_CDS"/>
    <property type="molecule type" value="Genomic_DNA"/>
</dbReference>
<dbReference type="EMBL" id="BC136876">
    <property type="protein sequence ID" value="AAI36877.1"/>
    <property type="molecule type" value="mRNA"/>
</dbReference>
<dbReference type="EMBL" id="BK004334">
    <property type="protein sequence ID" value="DAA04732.1"/>
    <property type="molecule type" value="Genomic_DNA"/>
</dbReference>
<dbReference type="RefSeq" id="NP_001004746.1">
    <property type="nucleotide sequence ID" value="NM_001004746.1"/>
</dbReference>
<dbReference type="SMR" id="Q8NGG2"/>
<dbReference type="FunCoup" id="Q8NGG2">
    <property type="interactions" value="416"/>
</dbReference>
<dbReference type="STRING" id="9606.ENSP00000323688"/>
<dbReference type="GlyCosmos" id="Q8NGG2">
    <property type="glycosylation" value="1 site, No reported glycans"/>
</dbReference>
<dbReference type="GlyGen" id="Q8NGG2">
    <property type="glycosylation" value="1 site"/>
</dbReference>
<dbReference type="iPTMnet" id="Q8NGG2"/>
<dbReference type="PhosphoSitePlus" id="Q8NGG2"/>
<dbReference type="BioMuta" id="OR5T2"/>
<dbReference type="DMDM" id="223590250"/>
<dbReference type="PaxDb" id="9606-ENSP00000323688"/>
<dbReference type="Antibodypedia" id="27221">
    <property type="antibodies" value="35 antibodies from 10 providers"/>
</dbReference>
<dbReference type="DNASU" id="219464"/>
<dbReference type="Ensembl" id="ENST00000573647.2">
    <property type="protein sequence ID" value="ENSP00000460931.1"/>
    <property type="gene ID" value="ENSG00000262851.2"/>
</dbReference>
<dbReference type="GeneID" id="219464"/>
<dbReference type="KEGG" id="hsa:219464"/>
<dbReference type="UCSC" id="uc010rjc.2">
    <property type="organism name" value="human"/>
</dbReference>
<dbReference type="AGR" id="HGNC:15296"/>
<dbReference type="CTD" id="219464"/>
<dbReference type="GeneCards" id="OR5T2"/>
<dbReference type="HGNC" id="HGNC:15296">
    <property type="gene designation" value="OR5T2"/>
</dbReference>
<dbReference type="neXtProt" id="NX_Q8NGG2"/>
<dbReference type="PharmGKB" id="PA32567"/>
<dbReference type="VEuPathDB" id="HostDB:ENSG00000181718"/>
<dbReference type="eggNOG" id="ENOG502SHA3">
    <property type="taxonomic scope" value="Eukaryota"/>
</dbReference>
<dbReference type="HOGENOM" id="CLU_012526_1_0_1"/>
<dbReference type="InParanoid" id="Q8NGG2"/>
<dbReference type="OrthoDB" id="9827639at2759"/>
<dbReference type="PAN-GO" id="Q8NGG2">
    <property type="GO annotations" value="6 GO annotations based on evolutionary models"/>
</dbReference>
<dbReference type="PhylomeDB" id="Q8NGG2"/>
<dbReference type="TreeFam" id="TF352753"/>
<dbReference type="PathwayCommons" id="Q8NGG2"/>
<dbReference type="Reactome" id="R-HSA-9752946">
    <property type="pathway name" value="Expression and translocation of olfactory receptors"/>
</dbReference>
<dbReference type="BioGRID-ORCS" id="219464">
    <property type="hits" value="11 hits in 739 CRISPR screens"/>
</dbReference>
<dbReference type="GeneWiki" id="OR5T2"/>
<dbReference type="GenomeRNAi" id="219464"/>
<dbReference type="Pharos" id="Q8NGG2">
    <property type="development level" value="Tdark"/>
</dbReference>
<dbReference type="PRO" id="PR:Q8NGG2"/>
<dbReference type="Proteomes" id="UP000005640">
    <property type="component" value="Unplaced"/>
</dbReference>
<dbReference type="RNAct" id="Q8NGG2">
    <property type="molecule type" value="protein"/>
</dbReference>
<dbReference type="GO" id="GO:0005886">
    <property type="term" value="C:plasma membrane"/>
    <property type="evidence" value="ECO:0007669"/>
    <property type="project" value="UniProtKB-SubCell"/>
</dbReference>
<dbReference type="GO" id="GO:0004930">
    <property type="term" value="F:G protein-coupled receptor activity"/>
    <property type="evidence" value="ECO:0007669"/>
    <property type="project" value="UniProtKB-KW"/>
</dbReference>
<dbReference type="GO" id="GO:0005549">
    <property type="term" value="F:odorant binding"/>
    <property type="evidence" value="ECO:0000318"/>
    <property type="project" value="GO_Central"/>
</dbReference>
<dbReference type="GO" id="GO:0004984">
    <property type="term" value="F:olfactory receptor activity"/>
    <property type="evidence" value="ECO:0000318"/>
    <property type="project" value="GO_Central"/>
</dbReference>
<dbReference type="GO" id="GO:0007186">
    <property type="term" value="P:G protein-coupled receptor signaling pathway"/>
    <property type="evidence" value="ECO:0000318"/>
    <property type="project" value="GO_Central"/>
</dbReference>
<dbReference type="GO" id="GO:0007608">
    <property type="term" value="P:sensory perception of smell"/>
    <property type="evidence" value="ECO:0000318"/>
    <property type="project" value="GO_Central"/>
</dbReference>
<dbReference type="FunFam" id="1.10.1220.70:FF:000001">
    <property type="entry name" value="Olfactory receptor"/>
    <property type="match status" value="1"/>
</dbReference>
<dbReference type="FunFam" id="1.20.1070.10:FF:000004">
    <property type="entry name" value="Olfactory receptor"/>
    <property type="match status" value="1"/>
</dbReference>
<dbReference type="Gene3D" id="1.20.1070.10">
    <property type="entry name" value="Rhodopsin 7-helix transmembrane proteins"/>
    <property type="match status" value="1"/>
</dbReference>
<dbReference type="InterPro" id="IPR000276">
    <property type="entry name" value="GPCR_Rhodpsn"/>
</dbReference>
<dbReference type="InterPro" id="IPR017452">
    <property type="entry name" value="GPCR_Rhodpsn_7TM"/>
</dbReference>
<dbReference type="InterPro" id="IPR000725">
    <property type="entry name" value="Olfact_rcpt"/>
</dbReference>
<dbReference type="PANTHER" id="PTHR48018">
    <property type="entry name" value="OLFACTORY RECEPTOR"/>
    <property type="match status" value="1"/>
</dbReference>
<dbReference type="Pfam" id="PF13853">
    <property type="entry name" value="7tm_4"/>
    <property type="match status" value="1"/>
</dbReference>
<dbReference type="PRINTS" id="PR00237">
    <property type="entry name" value="GPCRRHODOPSN"/>
</dbReference>
<dbReference type="PRINTS" id="PR00245">
    <property type="entry name" value="OLFACTORYR"/>
</dbReference>
<dbReference type="SUPFAM" id="SSF81321">
    <property type="entry name" value="Family A G protein-coupled receptor-like"/>
    <property type="match status" value="1"/>
</dbReference>
<dbReference type="PROSITE" id="PS00237">
    <property type="entry name" value="G_PROTEIN_RECEP_F1_1"/>
    <property type="match status" value="1"/>
</dbReference>
<dbReference type="PROSITE" id="PS50262">
    <property type="entry name" value="G_PROTEIN_RECEP_F1_2"/>
    <property type="match status" value="1"/>
</dbReference>
<sequence length="359" mass="40696">MSYSIYKSTVNIPLSHGVVHSFCHNMNCNFMHIFKFVLDFNMKNVTEVTLFVLKGFTDNLELQTIFFFLFLAIYLFTLMGNLGLILVVIRDSQLHKPMYYFLSMLSSVDACYSSVITPNMLVDFTTKNKVISFLGCVAQVFLACSFGTTECFLLAAMAYDRYVAIYNPLLYSVSMSPRVYMPLINASYVAGILHATIHTVATFSLSFCGANEIRRVFCDIPPLLAISYSDTHTNQLLLFYFVGSIELVTILIVLISYGLILLAILKMYSAEGRRKVFSTCGAHLTGVSIYYGTILFMYVRPSSSYASDHDMIVSIFYTIVIPLLNPVIYSLRNKDVKDSMKKMFGKNQVINKVYFHTKK</sequence>